<feature type="chain" id="PRO_0000064374" description="3-hydroxyanthranilate 3,4-dioxygenase">
    <location>
        <begin position="1"/>
        <end position="286"/>
    </location>
</feature>
<feature type="region of interest" description="Domain A (catalytic)" evidence="1">
    <location>
        <begin position="1"/>
        <end position="160"/>
    </location>
</feature>
<feature type="region of interest" description="Linker" evidence="1">
    <location>
        <begin position="161"/>
        <end position="177"/>
    </location>
</feature>
<feature type="region of interest" description="Domain B" evidence="1">
    <location>
        <begin position="178"/>
        <end position="286"/>
    </location>
</feature>
<feature type="binding site" evidence="1">
    <location>
        <position position="43"/>
    </location>
    <ligand>
        <name>O2</name>
        <dbReference type="ChEBI" id="CHEBI:15379"/>
    </ligand>
</feature>
<feature type="binding site" evidence="1">
    <location>
        <position position="47"/>
    </location>
    <ligand>
        <name>Fe cation</name>
        <dbReference type="ChEBI" id="CHEBI:24875"/>
        <note>catalytic</note>
    </ligand>
</feature>
<feature type="binding site" evidence="1">
    <location>
        <position position="53"/>
    </location>
    <ligand>
        <name>Fe cation</name>
        <dbReference type="ChEBI" id="CHEBI:24875"/>
        <note>catalytic</note>
    </ligand>
</feature>
<feature type="binding site" evidence="1">
    <location>
        <position position="53"/>
    </location>
    <ligand>
        <name>substrate</name>
    </ligand>
</feature>
<feature type="binding site" evidence="1">
    <location>
        <position position="91"/>
    </location>
    <ligand>
        <name>Fe cation</name>
        <dbReference type="ChEBI" id="CHEBI:24875"/>
        <note>catalytic</note>
    </ligand>
</feature>
<feature type="binding site" evidence="1">
    <location>
        <position position="95"/>
    </location>
    <ligand>
        <name>substrate</name>
    </ligand>
</feature>
<feature type="binding site" evidence="1">
    <location>
        <position position="105"/>
    </location>
    <ligand>
        <name>substrate</name>
    </ligand>
</feature>
<feature type="sequence conflict" description="In Ref. 2; AAH85739." evidence="3" ref="2">
    <original>R</original>
    <variation>Q</variation>
    <location>
        <position position="29"/>
    </location>
</feature>
<feature type="sequence conflict" description="In Ref. 3; AA sequence." evidence="3" ref="3">
    <original>K</original>
    <variation>S</variation>
    <location>
        <position position="44"/>
    </location>
</feature>
<feature type="sequence conflict" description="In Ref. 3; AA sequence." evidence="3" ref="3">
    <original>S</original>
    <variation>F</variation>
    <location>
        <position position="199"/>
    </location>
</feature>
<feature type="sequence conflict" description="In Ref. 3; AA sequence." evidence="3" ref="3">
    <original>G</original>
    <variation>C</variation>
    <location>
        <position position="204"/>
    </location>
</feature>
<feature type="sequence conflict" description="In Ref. 3; AA sequence." evidence="3" ref="3">
    <original>H</original>
    <variation>Y</variation>
    <location>
        <position position="214"/>
    </location>
</feature>
<feature type="sequence conflict" description="In Ref. 3; AA sequence." evidence="3" ref="3">
    <original>W</original>
    <variation>P</variation>
    <location>
        <position position="229"/>
    </location>
</feature>
<sequence>MERCVRVKSWVEENRASFQPPVCNKLMHREQLKIMFVGGPNTRKDYHIEEGEEVFYQLEGDMVLRVLEQGEHRDVVIRQGEIFLLPARVPHSPQRFANTMGLVIERRRMETELDGLRYYVGDTEDVLFEKWFHCKDLGTQLAPIIQEFFHSEQYRTGKPNPDQLLKEPPFPLSTRSVMEPMSLKAWLESHSRELQAGTSLSLFGDSYETQVIAHGQGSSKGPRQDVDVWLWQLEGSSKVTMGGQCVALAPDDSLLVPAGFSYMWERAQGSVALSVTQDPACKKPLG</sequence>
<evidence type="ECO:0000255" key="1">
    <source>
        <dbReference type="HAMAP-Rule" id="MF_03019"/>
    </source>
</evidence>
<evidence type="ECO:0000269" key="2">
    <source>
    </source>
</evidence>
<evidence type="ECO:0000305" key="3"/>
<gene>
    <name type="primary">Haao</name>
</gene>
<name>3HAO_RAT</name>
<dbReference type="EC" id="1.13.11.6" evidence="1 2"/>
<dbReference type="EMBL" id="D44494">
    <property type="protein sequence ID" value="BAA07937.1"/>
    <property type="molecule type" value="mRNA"/>
</dbReference>
<dbReference type="EMBL" id="BC085739">
    <property type="protein sequence ID" value="AAH85739.1"/>
    <property type="molecule type" value="mRNA"/>
</dbReference>
<dbReference type="EMBL" id="D28339">
    <property type="protein sequence ID" value="BAA21019.1"/>
    <property type="molecule type" value="mRNA"/>
</dbReference>
<dbReference type="RefSeq" id="NP_064461.1">
    <property type="nucleotide sequence ID" value="NM_020076.2"/>
</dbReference>
<dbReference type="SMR" id="P46953"/>
<dbReference type="FunCoup" id="P46953">
    <property type="interactions" value="305"/>
</dbReference>
<dbReference type="IntAct" id="P46953">
    <property type="interactions" value="4"/>
</dbReference>
<dbReference type="STRING" id="10116.ENSRNOP00000043835"/>
<dbReference type="BindingDB" id="P46953"/>
<dbReference type="ChEMBL" id="CHEMBL3108658"/>
<dbReference type="iPTMnet" id="P46953"/>
<dbReference type="PhosphoSitePlus" id="P46953"/>
<dbReference type="PaxDb" id="10116-ENSRNOP00000043835"/>
<dbReference type="GeneID" id="56823"/>
<dbReference type="KEGG" id="rno:56823"/>
<dbReference type="UCSC" id="RGD:71071">
    <property type="organism name" value="rat"/>
</dbReference>
<dbReference type="AGR" id="RGD:71071"/>
<dbReference type="CTD" id="23498"/>
<dbReference type="RGD" id="71071">
    <property type="gene designation" value="Haao"/>
</dbReference>
<dbReference type="eggNOG" id="KOG3995">
    <property type="taxonomic scope" value="Eukaryota"/>
</dbReference>
<dbReference type="InParanoid" id="P46953"/>
<dbReference type="OrthoDB" id="204928at2759"/>
<dbReference type="PhylomeDB" id="P46953"/>
<dbReference type="TreeFam" id="TF300246"/>
<dbReference type="Reactome" id="R-RNO-71240">
    <property type="pathway name" value="Tryptophan catabolism"/>
</dbReference>
<dbReference type="UniPathway" id="UPA00253">
    <property type="reaction ID" value="UER00330"/>
</dbReference>
<dbReference type="PRO" id="PR:P46953"/>
<dbReference type="Proteomes" id="UP000002494">
    <property type="component" value="Unplaced"/>
</dbReference>
<dbReference type="GO" id="GO:0005737">
    <property type="term" value="C:cytoplasm"/>
    <property type="evidence" value="ECO:0000318"/>
    <property type="project" value="GO_Central"/>
</dbReference>
<dbReference type="GO" id="GO:0005829">
    <property type="term" value="C:cytosol"/>
    <property type="evidence" value="ECO:0000266"/>
    <property type="project" value="RGD"/>
</dbReference>
<dbReference type="GO" id="GO:0031966">
    <property type="term" value="C:mitochondrial membrane"/>
    <property type="evidence" value="ECO:0000314"/>
    <property type="project" value="RGD"/>
</dbReference>
<dbReference type="GO" id="GO:0000334">
    <property type="term" value="F:3-hydroxyanthranilate 3,4-dioxygenase activity"/>
    <property type="evidence" value="ECO:0000314"/>
    <property type="project" value="RGD"/>
</dbReference>
<dbReference type="GO" id="GO:0008198">
    <property type="term" value="F:ferrous iron binding"/>
    <property type="evidence" value="ECO:0000266"/>
    <property type="project" value="RGD"/>
</dbReference>
<dbReference type="GO" id="GO:0005506">
    <property type="term" value="F:iron ion binding"/>
    <property type="evidence" value="ECO:0000314"/>
    <property type="project" value="RGD"/>
</dbReference>
<dbReference type="GO" id="GO:0019825">
    <property type="term" value="F:oxygen binding"/>
    <property type="evidence" value="ECO:0000314"/>
    <property type="project" value="RGD"/>
</dbReference>
<dbReference type="GO" id="GO:0034354">
    <property type="term" value="P:'de novo' NAD biosynthetic process from L-tryptophan"/>
    <property type="evidence" value="ECO:0000318"/>
    <property type="project" value="GO_Central"/>
</dbReference>
<dbReference type="GO" id="GO:0043420">
    <property type="term" value="P:anthranilate metabolic process"/>
    <property type="evidence" value="ECO:0007669"/>
    <property type="project" value="UniProtKB-UniRule"/>
</dbReference>
<dbReference type="GO" id="GO:0006569">
    <property type="term" value="P:L-tryptophan catabolic process"/>
    <property type="evidence" value="ECO:0007669"/>
    <property type="project" value="UniProtKB-UniRule"/>
</dbReference>
<dbReference type="GO" id="GO:0009435">
    <property type="term" value="P:NAD biosynthetic process"/>
    <property type="evidence" value="ECO:0000266"/>
    <property type="project" value="RGD"/>
</dbReference>
<dbReference type="GO" id="GO:0070050">
    <property type="term" value="P:neuron cellular homeostasis"/>
    <property type="evidence" value="ECO:0000266"/>
    <property type="project" value="RGD"/>
</dbReference>
<dbReference type="GO" id="GO:0019805">
    <property type="term" value="P:quinolinate biosynthetic process"/>
    <property type="evidence" value="ECO:0000266"/>
    <property type="project" value="RGD"/>
</dbReference>
<dbReference type="GO" id="GO:0046874">
    <property type="term" value="P:quinolinate metabolic process"/>
    <property type="evidence" value="ECO:0000314"/>
    <property type="project" value="RGD"/>
</dbReference>
<dbReference type="GO" id="GO:0046686">
    <property type="term" value="P:response to cadmium ion"/>
    <property type="evidence" value="ECO:0000266"/>
    <property type="project" value="RGD"/>
</dbReference>
<dbReference type="GO" id="GO:0010043">
    <property type="term" value="P:response to zinc ion"/>
    <property type="evidence" value="ECO:0000266"/>
    <property type="project" value="RGD"/>
</dbReference>
<dbReference type="CDD" id="cd06123">
    <property type="entry name" value="cupin_HAO"/>
    <property type="match status" value="1"/>
</dbReference>
<dbReference type="FunFam" id="2.60.120.10:FF:000077">
    <property type="entry name" value="3-hydroxyanthranilate 3,4-dioxygenase"/>
    <property type="match status" value="1"/>
</dbReference>
<dbReference type="Gene3D" id="2.60.120.10">
    <property type="entry name" value="Jelly Rolls"/>
    <property type="match status" value="1"/>
</dbReference>
<dbReference type="HAMAP" id="MF_00825">
    <property type="entry name" value="3_HAO"/>
    <property type="match status" value="1"/>
</dbReference>
<dbReference type="InterPro" id="IPR010329">
    <property type="entry name" value="3hydroanth_dOase"/>
</dbReference>
<dbReference type="InterPro" id="IPR016700">
    <property type="entry name" value="3hydroanth_dOase_met"/>
</dbReference>
<dbReference type="InterPro" id="IPR014710">
    <property type="entry name" value="RmlC-like_jellyroll"/>
</dbReference>
<dbReference type="InterPro" id="IPR011051">
    <property type="entry name" value="RmlC_Cupin_sf"/>
</dbReference>
<dbReference type="NCBIfam" id="TIGR03037">
    <property type="entry name" value="anthran_nbaC"/>
    <property type="match status" value="1"/>
</dbReference>
<dbReference type="PANTHER" id="PTHR15497">
    <property type="entry name" value="3-HYDROXYANTHRANILATE 3,4-DIOXYGENASE"/>
    <property type="match status" value="1"/>
</dbReference>
<dbReference type="PANTHER" id="PTHR15497:SF1">
    <property type="entry name" value="3-HYDROXYANTHRANILATE 3,4-DIOXYGENASE"/>
    <property type="match status" value="1"/>
</dbReference>
<dbReference type="Pfam" id="PF06052">
    <property type="entry name" value="3-HAO"/>
    <property type="match status" value="1"/>
</dbReference>
<dbReference type="PIRSF" id="PIRSF017681">
    <property type="entry name" value="3hydroanth_dOase_animal"/>
    <property type="match status" value="1"/>
</dbReference>
<dbReference type="SUPFAM" id="SSF51182">
    <property type="entry name" value="RmlC-like cupins"/>
    <property type="match status" value="2"/>
</dbReference>
<keyword id="KW-0963">Cytoplasm</keyword>
<keyword id="KW-0223">Dioxygenase</keyword>
<keyword id="KW-0903">Direct protein sequencing</keyword>
<keyword id="KW-0408">Iron</keyword>
<keyword id="KW-0479">Metal-binding</keyword>
<keyword id="KW-0560">Oxidoreductase</keyword>
<keyword id="KW-0662">Pyridine nucleotide biosynthesis</keyword>
<keyword id="KW-1185">Reference proteome</keyword>
<reference key="1">
    <citation type="journal article" date="1995" name="Biosci. Biotechnol. Biochem.">
        <title>Increase in the level of mRNA for 3-hydroxyanthranilate 3,4-dioxygenase in brain of epilepsy-prone El mice.</title>
        <authorList>
            <person name="Nakagawa Y."/>
            <person name="Asai H."/>
            <person name="Mori H."/>
            <person name="Kitoh J."/>
            <person name="Nakano K."/>
        </authorList>
    </citation>
    <scope>NUCLEOTIDE SEQUENCE [MRNA]</scope>
    <source>
        <strain>Sprague-Dawley</strain>
        <tissue>Liver</tissue>
    </source>
</reference>
<reference key="2">
    <citation type="journal article" date="2004" name="Genome Res.">
        <title>The status, quality, and expansion of the NIH full-length cDNA project: the Mammalian Gene Collection (MGC).</title>
        <authorList>
            <consortium name="The MGC Project Team"/>
        </authorList>
    </citation>
    <scope>NUCLEOTIDE SEQUENCE [LARGE SCALE MRNA]</scope>
    <source>
        <tissue>Kidney</tissue>
    </source>
</reference>
<reference key="3">
    <citation type="journal article" date="1994" name="J. Biol. Chem.">
        <title>Molecular cloning and functional expression of human 3-hydroxyanthranilic-acid dioxygenase.</title>
        <authorList>
            <person name="Malherbe P."/>
            <person name="Kohler C."/>
            <person name="da Prada M."/>
            <person name="Lang G."/>
            <person name="Kiefer V."/>
            <person name="Schwarcz R."/>
            <person name="Lahm H."/>
            <person name="Cesura A.M."/>
        </authorList>
    </citation>
    <scope>PARTIAL NUCLEOTIDE SEQUENCE [MRNA] OF 44-236</scope>
    <scope>PARTIAL PROTEIN SEQUENCE</scope>
</reference>
<reference key="4">
    <citation type="journal article" date="1986" name="J. Neurochem.">
        <title>Synthesis of quinolinic acid by 3-hydroxyanthranilic acid oxygenase in rat brain tissue in vitro.</title>
        <authorList>
            <person name="Foster A.C."/>
            <person name="White R.J."/>
            <person name="Schwarcz R."/>
        </authorList>
    </citation>
    <scope>FUNCTION</scope>
    <scope>CATALYTIC ACTIVITY</scope>
    <scope>BIOPHYSICOCHEMICAL PROPERTIES</scope>
    <scope>COFACTOR</scope>
</reference>
<organism>
    <name type="scientific">Rattus norvegicus</name>
    <name type="common">Rat</name>
    <dbReference type="NCBI Taxonomy" id="10116"/>
    <lineage>
        <taxon>Eukaryota</taxon>
        <taxon>Metazoa</taxon>
        <taxon>Chordata</taxon>
        <taxon>Craniata</taxon>
        <taxon>Vertebrata</taxon>
        <taxon>Euteleostomi</taxon>
        <taxon>Mammalia</taxon>
        <taxon>Eutheria</taxon>
        <taxon>Euarchontoglires</taxon>
        <taxon>Glires</taxon>
        <taxon>Rodentia</taxon>
        <taxon>Myomorpha</taxon>
        <taxon>Muroidea</taxon>
        <taxon>Muridae</taxon>
        <taxon>Murinae</taxon>
        <taxon>Rattus</taxon>
    </lineage>
</organism>
<proteinExistence type="evidence at protein level"/>
<accession>P46953</accession>
<accession>P70474</accession>
<accession>Q5RKK0</accession>
<accession>Q64556</accession>
<protein>
    <recommendedName>
        <fullName evidence="1">3-hydroxyanthranilate 3,4-dioxygenase</fullName>
        <ecNumber evidence="1 2">1.13.11.6</ecNumber>
    </recommendedName>
    <alternativeName>
        <fullName evidence="1">3-hydroxyanthranilate oxygenase</fullName>
        <shortName evidence="1">3-HAO</shortName>
    </alternativeName>
    <alternativeName>
        <fullName evidence="1">3-hydroxyanthranilic acid dioxygenase</fullName>
        <shortName evidence="1">HAD</shortName>
    </alternativeName>
</protein>
<comment type="function">
    <text evidence="1 2">Catalyzes the oxidative ring opening of 3-hydroxyanthranilate to 2-amino-3-carboxymuconate semialdehyde, which spontaneously cyclizes to quinolinate.</text>
</comment>
<comment type="catalytic activity">
    <reaction evidence="1 2">
        <text>3-hydroxyanthranilate + O2 = (2Z,4Z)-2-amino-3-carboxymuconate 6-semialdehyde</text>
        <dbReference type="Rhea" id="RHEA:17953"/>
        <dbReference type="ChEBI" id="CHEBI:15379"/>
        <dbReference type="ChEBI" id="CHEBI:36559"/>
        <dbReference type="ChEBI" id="CHEBI:77612"/>
        <dbReference type="EC" id="1.13.11.6"/>
    </reaction>
</comment>
<comment type="cofactor">
    <cofactor evidence="1 2">
        <name>Fe(2+)</name>
        <dbReference type="ChEBI" id="CHEBI:29033"/>
    </cofactor>
</comment>
<comment type="biophysicochemical properties">
    <kinetics>
        <KM evidence="2">3.6 uM for 3-hydroxyanthranilate</KM>
        <Vmax evidence="2">73.7 pmol/h/mg enzyme</Vmax>
    </kinetics>
</comment>
<comment type="pathway">
    <text evidence="1">Cofactor biosynthesis; NAD(+) biosynthesis; quinolinate from L-kynurenine: step 3/3.</text>
</comment>
<comment type="subunit">
    <text evidence="1">Monomer.</text>
</comment>
<comment type="subcellular location">
    <subcellularLocation>
        <location evidence="1">Cytoplasm</location>
        <location evidence="1">Cytosol</location>
    </subcellularLocation>
</comment>
<comment type="similarity">
    <text evidence="1">Belongs to the 3-HAO family.</text>
</comment>